<sequence>MCKDSACFLTMKETDLEAVATAVQRVAGMLQRPDQLDKVEQYRRREARKKASVEARLKAAIQSQLDGVRTGLSQLHNALNDVKDIQQSLADVSKDWRQSINTIESLKDVKDAVVQHSQLAAAVENLKNIFSVPEIVRETQDLIEQGALLQAHRKLMDLECSRDGLMCEQYRMDSGNKRDMTLIHGYFGSTQGLSDELAKQLWMVLQRSLVTVRRDPTLLVSVVRIIEREEKIDRRILDRKKQTGFVPPGRPKNWKEKMFAILDRTVTTRIEGTQADTRESDKMWLVRHLEIIRKYVLDDLIVAKNLMVQCFPPHYEIFKNLLSMYHQALSTRMQDLASEDLEANEIVSLLTWVLNTYTSAEMMGNVELAPEVDVSALEPLLSPNIVSELLDTYMSTLTSNIIAWLRKALETDKKDWSKETEPEADQDGYYQTTLPAIVFQMFEQNLQVAAQISEDLKTKVLVLCLQQMNSFLSRYKDEAQLYKEEHLRNRQHPHCYVQYMIAIINNCQTFKESIISLKRKYLKTEAEEGLCLSQPSMDGILDAIAKEGCSSLLEEVFLDLEQHLNELMTKKWLLGSNAVDIICVTVEDYFNDFAKIKKPYKKRMTAEAHRRVVVEYLRAVMQKRISFRSAEERKEGAEKMVREAEQLRFLFRKLASGFGEDADGHCDTIVAVAEVIKLTDPSLLYLEVSTLVSKYPDIRDDHIGALLALRGDASRDMKQTIMETLEQGPMQASPNYVPIFKEIVVPSLNVAKLLK</sequence>
<protein>
    <recommendedName>
        <fullName>Exocyst complex component 3</fullName>
    </recommendedName>
    <alternativeName>
        <fullName>Exocyst complex component Sec6</fullName>
    </alternativeName>
</protein>
<reference key="1">
    <citation type="journal article" date="2004" name="DNA Res.">
        <title>Prediction of the coding sequences of mouse homologues of FLJ genes: the complete nucleotide sequences of 110 mouse FLJ-homologous cDNAs identified by screening of terminal sequences of cDNA clones randomly sampled from size-fractionated libraries.</title>
        <authorList>
            <person name="Okazaki N."/>
            <person name="Kikuno R."/>
            <person name="Ohara R."/>
            <person name="Inamoto S."/>
            <person name="Koseki H."/>
            <person name="Hiraoka S."/>
            <person name="Saga Y."/>
            <person name="Kitamura H."/>
            <person name="Nakagawa T."/>
            <person name="Nagase T."/>
            <person name="Ohara O."/>
            <person name="Koga H."/>
        </authorList>
    </citation>
    <scope>NUCLEOTIDE SEQUENCE [LARGE SCALE MRNA]</scope>
    <source>
        <tissue>Fetal brain</tissue>
    </source>
</reference>
<reference key="2">
    <citation type="journal article" date="2007" name="J. Biol. Chem.">
        <title>MyRIP anchors protein kinase A to the exocyst complex.</title>
        <authorList>
            <person name="Goehring A.S."/>
            <person name="Pedroja B.S."/>
            <person name="Hinke S.A."/>
            <person name="Langeberg L.K."/>
            <person name="Scott J.D."/>
        </authorList>
    </citation>
    <scope>INTERACTION WITH MYRIP</scope>
</reference>
<reference key="3">
    <citation type="journal article" date="2008" name="Biomed. Res.">
        <title>Involvement of Exoc3l, a protein structurally related to the exocyst subunit Sec6, in insulin secretion.</title>
        <authorList>
            <person name="Saito T."/>
            <person name="Shibasaki T."/>
            <person name="Seino S."/>
        </authorList>
    </citation>
    <scope>INTERACTION WITH EXOC3L1</scope>
</reference>
<reference key="4">
    <citation type="journal article" date="2010" name="Cell">
        <title>A tissue-specific atlas of mouse protein phosphorylation and expression.</title>
        <authorList>
            <person name="Huttlin E.L."/>
            <person name="Jedrychowski M.P."/>
            <person name="Elias J.E."/>
            <person name="Goswami T."/>
            <person name="Rad R."/>
            <person name="Beausoleil S.A."/>
            <person name="Villen J."/>
            <person name="Haas W."/>
            <person name="Sowa M.E."/>
            <person name="Gygi S.P."/>
        </authorList>
    </citation>
    <scope>IDENTIFICATION BY MASS SPECTROMETRY [LARGE SCALE ANALYSIS]</scope>
    <source>
        <tissue>Brain</tissue>
        <tissue>Brown adipose tissue</tissue>
        <tissue>Kidney</tissue>
        <tissue>Lung</tissue>
        <tissue>Spleen</tissue>
        <tissue>Testis</tissue>
    </source>
</reference>
<accession>Q6KAR6</accession>
<proteinExistence type="evidence at protein level"/>
<name>EXOC3_MOUSE</name>
<evidence type="ECO:0000250" key="1"/>
<evidence type="ECO:0000250" key="2">
    <source>
        <dbReference type="UniProtKB" id="O54921"/>
    </source>
</evidence>
<evidence type="ECO:0000250" key="3">
    <source>
        <dbReference type="UniProtKB" id="O60645"/>
    </source>
</evidence>
<evidence type="ECO:0000250" key="4">
    <source>
        <dbReference type="UniProtKB" id="Q62825"/>
    </source>
</evidence>
<evidence type="ECO:0000269" key="5">
    <source>
    </source>
</evidence>
<evidence type="ECO:0000269" key="6">
    <source>
    </source>
</evidence>
<evidence type="ECO:0000305" key="7"/>
<dbReference type="EMBL" id="AK131141">
    <property type="protein sequence ID" value="BAD21391.1"/>
    <property type="status" value="ALT_INIT"/>
    <property type="molecule type" value="mRNA"/>
</dbReference>
<dbReference type="CCDS" id="CCDS26640.1"/>
<dbReference type="RefSeq" id="NP_796307.2">
    <property type="nucleotide sequence ID" value="NM_177333.4"/>
</dbReference>
<dbReference type="RefSeq" id="XP_006517254.1">
    <property type="nucleotide sequence ID" value="XM_006517191.4"/>
</dbReference>
<dbReference type="SMR" id="Q6KAR6"/>
<dbReference type="BioGRID" id="229233">
    <property type="interactions" value="8"/>
</dbReference>
<dbReference type="ComplexPortal" id="CPX-4982">
    <property type="entry name" value="Exocyst, Exoc6 variant"/>
</dbReference>
<dbReference type="ComplexPortal" id="CPX-4983">
    <property type="entry name" value="Exocyst, Exoc6b variant"/>
</dbReference>
<dbReference type="FunCoup" id="Q6KAR6">
    <property type="interactions" value="2361"/>
</dbReference>
<dbReference type="IntAct" id="Q6KAR6">
    <property type="interactions" value="5"/>
</dbReference>
<dbReference type="MINT" id="Q6KAR6"/>
<dbReference type="STRING" id="10090.ENSMUSP00000039416"/>
<dbReference type="iPTMnet" id="Q6KAR6"/>
<dbReference type="PhosphoSitePlus" id="Q6KAR6"/>
<dbReference type="PaxDb" id="10090-ENSMUSP00000039416"/>
<dbReference type="PeptideAtlas" id="Q6KAR6"/>
<dbReference type="ProteomicsDB" id="275487"/>
<dbReference type="Pumba" id="Q6KAR6"/>
<dbReference type="Antibodypedia" id="22230">
    <property type="antibodies" value="147 antibodies from 27 providers"/>
</dbReference>
<dbReference type="DNASU" id="211446"/>
<dbReference type="Ensembl" id="ENSMUST00000035934.7">
    <property type="protein sequence ID" value="ENSMUSP00000039416.6"/>
    <property type="gene ID" value="ENSMUSG00000034152.7"/>
</dbReference>
<dbReference type="GeneID" id="211446"/>
<dbReference type="KEGG" id="mmu:211446"/>
<dbReference type="UCSC" id="uc007reu.1">
    <property type="organism name" value="mouse"/>
</dbReference>
<dbReference type="AGR" id="MGI:2443972"/>
<dbReference type="CTD" id="11336"/>
<dbReference type="MGI" id="MGI:2443972">
    <property type="gene designation" value="Exoc3"/>
</dbReference>
<dbReference type="VEuPathDB" id="HostDB:ENSMUSG00000034152"/>
<dbReference type="eggNOG" id="KOG2286">
    <property type="taxonomic scope" value="Eukaryota"/>
</dbReference>
<dbReference type="GeneTree" id="ENSGT01030000234613"/>
<dbReference type="HOGENOM" id="CLU_016260_1_0_1"/>
<dbReference type="InParanoid" id="Q6KAR6"/>
<dbReference type="OMA" id="MNIGPKT"/>
<dbReference type="OrthoDB" id="10047020at2759"/>
<dbReference type="PhylomeDB" id="Q6KAR6"/>
<dbReference type="TreeFam" id="TF314979"/>
<dbReference type="Reactome" id="R-MMU-264876">
    <property type="pathway name" value="Insulin processing"/>
</dbReference>
<dbReference type="Reactome" id="R-MMU-5620916">
    <property type="pathway name" value="VxPx cargo-targeting to cilium"/>
</dbReference>
<dbReference type="BioGRID-ORCS" id="211446">
    <property type="hits" value="22 hits in 62 CRISPR screens"/>
</dbReference>
<dbReference type="CD-CODE" id="CE726F99">
    <property type="entry name" value="Postsynaptic density"/>
</dbReference>
<dbReference type="ChiTaRS" id="Exoc3">
    <property type="organism name" value="mouse"/>
</dbReference>
<dbReference type="PRO" id="PR:Q6KAR6"/>
<dbReference type="Proteomes" id="UP000000589">
    <property type="component" value="Chromosome 13"/>
</dbReference>
<dbReference type="RNAct" id="Q6KAR6">
    <property type="molecule type" value="protein"/>
</dbReference>
<dbReference type="Bgee" id="ENSMUSG00000034152">
    <property type="expression patterns" value="Expressed in manus and 225 other cell types or tissues"/>
</dbReference>
<dbReference type="ExpressionAtlas" id="Q6KAR6">
    <property type="expression patterns" value="baseline and differential"/>
</dbReference>
<dbReference type="GO" id="GO:0000145">
    <property type="term" value="C:exocyst"/>
    <property type="evidence" value="ECO:0000303"/>
    <property type="project" value="ComplexPortal"/>
</dbReference>
<dbReference type="GO" id="GO:0005794">
    <property type="term" value="C:Golgi apparatus"/>
    <property type="evidence" value="ECO:0007669"/>
    <property type="project" value="UniProtKB-SubCell"/>
</dbReference>
<dbReference type="GO" id="GO:0030426">
    <property type="term" value="C:growth cone"/>
    <property type="evidence" value="ECO:0007669"/>
    <property type="project" value="UniProtKB-SubCell"/>
</dbReference>
<dbReference type="GO" id="GO:0030496">
    <property type="term" value="C:midbody"/>
    <property type="evidence" value="ECO:0007669"/>
    <property type="project" value="UniProtKB-SubCell"/>
</dbReference>
<dbReference type="GO" id="GO:0048471">
    <property type="term" value="C:perinuclear region of cytoplasm"/>
    <property type="evidence" value="ECO:0007669"/>
    <property type="project" value="UniProtKB-SubCell"/>
</dbReference>
<dbReference type="GO" id="GO:0030667">
    <property type="term" value="C:secretory granule membrane"/>
    <property type="evidence" value="ECO:0000304"/>
    <property type="project" value="Reactome"/>
</dbReference>
<dbReference type="GO" id="GO:0090148">
    <property type="term" value="P:membrane fission"/>
    <property type="evidence" value="ECO:0000303"/>
    <property type="project" value="ComplexPortal"/>
</dbReference>
<dbReference type="GO" id="GO:0000281">
    <property type="term" value="P:mitotic cytokinesis"/>
    <property type="evidence" value="ECO:0000303"/>
    <property type="project" value="ComplexPortal"/>
</dbReference>
<dbReference type="GO" id="GO:0015031">
    <property type="term" value="P:protein transport"/>
    <property type="evidence" value="ECO:0007669"/>
    <property type="project" value="UniProtKB-KW"/>
</dbReference>
<dbReference type="GO" id="GO:0006904">
    <property type="term" value="P:vesicle docking involved in exocytosis"/>
    <property type="evidence" value="ECO:0000303"/>
    <property type="project" value="ComplexPortal"/>
</dbReference>
<dbReference type="GO" id="GO:0090522">
    <property type="term" value="P:vesicle tethering involved in exocytosis"/>
    <property type="evidence" value="ECO:0000303"/>
    <property type="project" value="ComplexPortal"/>
</dbReference>
<dbReference type="FunFam" id="1.10.357.50:FF:000004">
    <property type="entry name" value="Exocyst complex component 3"/>
    <property type="match status" value="1"/>
</dbReference>
<dbReference type="FunFam" id="1.10.357.70:FF:000001">
    <property type="entry name" value="Exocyst complex component 3"/>
    <property type="match status" value="1"/>
</dbReference>
<dbReference type="Gene3D" id="1.10.357.50">
    <property type="match status" value="1"/>
</dbReference>
<dbReference type="Gene3D" id="1.10.357.70">
    <property type="entry name" value="Exocyst complex component Sec6, C-terminal domain"/>
    <property type="match status" value="1"/>
</dbReference>
<dbReference type="InterPro" id="IPR010326">
    <property type="entry name" value="EXOC3/Sec6"/>
</dbReference>
<dbReference type="InterPro" id="IPR042532">
    <property type="entry name" value="EXOC3/Sec6_C"/>
</dbReference>
<dbReference type="PANTHER" id="PTHR21292:SF13">
    <property type="entry name" value="EXOCYST COMPLEX COMPONENT 3"/>
    <property type="match status" value="1"/>
</dbReference>
<dbReference type="PANTHER" id="PTHR21292">
    <property type="entry name" value="EXOCYST COMPLEX COMPONENT SEC6-RELATED"/>
    <property type="match status" value="1"/>
</dbReference>
<dbReference type="Pfam" id="PF06046">
    <property type="entry name" value="Sec6"/>
    <property type="match status" value="1"/>
</dbReference>
<feature type="chain" id="PRO_0000118926" description="Exocyst complex component 3">
    <location>
        <begin position="1"/>
        <end position="755"/>
    </location>
</feature>
<feature type="modified residue" description="N6-acetyllysine" evidence="3">
    <location>
        <position position="38"/>
    </location>
</feature>
<comment type="function">
    <text evidence="1">Component of the exocyst complex involved in the docking of exocytic vesicles with fusion sites on the plasma membrane.</text>
</comment>
<comment type="subunit">
    <text evidence="2 4 5 6">The exocyst complex is composed of EXOC1, EXOC2, EXOC3, EXOC4, EXOC5, EXOC6, EXOC7 and EXOC8 (By similarity). Interacts with EXOC3L1 (PubMed:18480549). Interacts with BIRC6/bruce (By similarity). Interacts with MYRIP (PubMed:17827149). Interacts with SLC6A9 (By similarity).</text>
</comment>
<comment type="subcellular location">
    <subcellularLocation>
        <location evidence="2">Cytoplasm</location>
    </subcellularLocation>
    <subcellularLocation>
        <location evidence="2">Cytoplasm</location>
        <location evidence="2">Perinuclear region</location>
    </subcellularLocation>
    <subcellularLocation>
        <location evidence="2">Cell projection</location>
        <location evidence="2">Growth cone</location>
    </subcellularLocation>
    <subcellularLocation>
        <location evidence="3">Midbody</location>
    </subcellularLocation>
    <subcellularLocation>
        <location evidence="3">Golgi apparatus</location>
    </subcellularLocation>
    <subcellularLocation>
        <location evidence="4">Cell projection</location>
        <location evidence="4">Neuron projection</location>
    </subcellularLocation>
    <text evidence="2 3">Perinuclear in undifferentiated cells. Redistributes to growing neurites and growth cones during neuronal differentiation (By similarity). During mitosis, early recruitment to the midbody requires RALA, but not RALB, and EXOC2. In late stages of cytokinesis, localization to the midbody is RALB-dependent (By similarity).</text>
</comment>
<comment type="similarity">
    <text evidence="7">Belongs to the SEC6 family.</text>
</comment>
<comment type="caution">
    <text evidence="7">It is uncertain whether Met-1 or Met-11 is the initiator.</text>
</comment>
<comment type="sequence caution" evidence="7">
    <conflict type="erroneous initiation">
        <sequence resource="EMBL-CDS" id="BAD21391"/>
    </conflict>
    <text>Extended N-terminus.</text>
</comment>
<organism>
    <name type="scientific">Mus musculus</name>
    <name type="common">Mouse</name>
    <dbReference type="NCBI Taxonomy" id="10090"/>
    <lineage>
        <taxon>Eukaryota</taxon>
        <taxon>Metazoa</taxon>
        <taxon>Chordata</taxon>
        <taxon>Craniata</taxon>
        <taxon>Vertebrata</taxon>
        <taxon>Euteleostomi</taxon>
        <taxon>Mammalia</taxon>
        <taxon>Eutheria</taxon>
        <taxon>Euarchontoglires</taxon>
        <taxon>Glires</taxon>
        <taxon>Rodentia</taxon>
        <taxon>Myomorpha</taxon>
        <taxon>Muroidea</taxon>
        <taxon>Muridae</taxon>
        <taxon>Murinae</taxon>
        <taxon>Mus</taxon>
        <taxon>Mus</taxon>
    </lineage>
</organism>
<gene>
    <name type="primary">Exoc3</name>
    <name type="synonym">Sec6l1</name>
</gene>
<keyword id="KW-0007">Acetylation</keyword>
<keyword id="KW-0966">Cell projection</keyword>
<keyword id="KW-0963">Cytoplasm</keyword>
<keyword id="KW-0268">Exocytosis</keyword>
<keyword id="KW-0333">Golgi apparatus</keyword>
<keyword id="KW-0653">Protein transport</keyword>
<keyword id="KW-1185">Reference proteome</keyword>
<keyword id="KW-0813">Transport</keyword>